<reference key="1">
    <citation type="journal article" date="2006" name="J. Bacteriol.">
        <title>Whole-genome sequence of Listeria welshimeri reveals common steps in genome reduction with Listeria innocua as compared to Listeria monocytogenes.</title>
        <authorList>
            <person name="Hain T."/>
            <person name="Steinweg C."/>
            <person name="Kuenne C.T."/>
            <person name="Billion A."/>
            <person name="Ghai R."/>
            <person name="Chatterjee S.S."/>
            <person name="Domann E."/>
            <person name="Kaerst U."/>
            <person name="Goesmann A."/>
            <person name="Bekel T."/>
            <person name="Bartels D."/>
            <person name="Kaiser O."/>
            <person name="Meyer F."/>
            <person name="Puehler A."/>
            <person name="Weisshaar B."/>
            <person name="Wehland J."/>
            <person name="Liang C."/>
            <person name="Dandekar T."/>
            <person name="Lampidis R."/>
            <person name="Kreft J."/>
            <person name="Goebel W."/>
            <person name="Chakraborty T."/>
        </authorList>
    </citation>
    <scope>NUCLEOTIDE SEQUENCE [LARGE SCALE GENOMIC DNA]</scope>
    <source>
        <strain>ATCC 35897 / DSM 20650 / CCUG 15529 / CIP 8149 / NCTC 11857 / SLCC 5334 / V8</strain>
    </source>
</reference>
<sequence length="49" mass="6007">MRVNITLECTECGDRNYITTKNKRENPERIELKKYCPRLRRVTLHRETK</sequence>
<accession>A0AID6</accession>
<keyword id="KW-0687">Ribonucleoprotein</keyword>
<keyword id="KW-0689">Ribosomal protein</keyword>
<organism>
    <name type="scientific">Listeria welshimeri serovar 6b (strain ATCC 35897 / DSM 20650 / CCUG 15529 / CIP 8149 / NCTC 11857 / SLCC 5334 / V8)</name>
    <dbReference type="NCBI Taxonomy" id="386043"/>
    <lineage>
        <taxon>Bacteria</taxon>
        <taxon>Bacillati</taxon>
        <taxon>Bacillota</taxon>
        <taxon>Bacilli</taxon>
        <taxon>Bacillales</taxon>
        <taxon>Listeriaceae</taxon>
        <taxon>Listeria</taxon>
    </lineage>
</organism>
<dbReference type="EMBL" id="AM263198">
    <property type="protein sequence ID" value="CAK20768.1"/>
    <property type="molecule type" value="Genomic_DNA"/>
</dbReference>
<dbReference type="SMR" id="A0AID6"/>
<dbReference type="STRING" id="386043.lwe1350"/>
<dbReference type="KEGG" id="lwe:lwe1350"/>
<dbReference type="eggNOG" id="COG0267">
    <property type="taxonomic scope" value="Bacteria"/>
</dbReference>
<dbReference type="HOGENOM" id="CLU_190949_0_2_9"/>
<dbReference type="OrthoDB" id="197660at2"/>
<dbReference type="Proteomes" id="UP000000779">
    <property type="component" value="Chromosome"/>
</dbReference>
<dbReference type="GO" id="GO:0005737">
    <property type="term" value="C:cytoplasm"/>
    <property type="evidence" value="ECO:0007669"/>
    <property type="project" value="UniProtKB-ARBA"/>
</dbReference>
<dbReference type="GO" id="GO:1990904">
    <property type="term" value="C:ribonucleoprotein complex"/>
    <property type="evidence" value="ECO:0007669"/>
    <property type="project" value="UniProtKB-KW"/>
</dbReference>
<dbReference type="GO" id="GO:0005840">
    <property type="term" value="C:ribosome"/>
    <property type="evidence" value="ECO:0007669"/>
    <property type="project" value="UniProtKB-KW"/>
</dbReference>
<dbReference type="GO" id="GO:0003735">
    <property type="term" value="F:structural constituent of ribosome"/>
    <property type="evidence" value="ECO:0007669"/>
    <property type="project" value="InterPro"/>
</dbReference>
<dbReference type="GO" id="GO:0006412">
    <property type="term" value="P:translation"/>
    <property type="evidence" value="ECO:0007669"/>
    <property type="project" value="UniProtKB-UniRule"/>
</dbReference>
<dbReference type="Gene3D" id="2.20.28.120">
    <property type="entry name" value="Ribosomal protein L33"/>
    <property type="match status" value="1"/>
</dbReference>
<dbReference type="HAMAP" id="MF_00294">
    <property type="entry name" value="Ribosomal_bL33"/>
    <property type="match status" value="1"/>
</dbReference>
<dbReference type="InterPro" id="IPR001705">
    <property type="entry name" value="Ribosomal_bL33"/>
</dbReference>
<dbReference type="InterPro" id="IPR018264">
    <property type="entry name" value="Ribosomal_bL33_CS"/>
</dbReference>
<dbReference type="InterPro" id="IPR038584">
    <property type="entry name" value="Ribosomal_bL33_sf"/>
</dbReference>
<dbReference type="InterPro" id="IPR011332">
    <property type="entry name" value="Ribosomal_zn-bd"/>
</dbReference>
<dbReference type="NCBIfam" id="NF001764">
    <property type="entry name" value="PRK00504.1"/>
    <property type="match status" value="1"/>
</dbReference>
<dbReference type="NCBIfam" id="NF001860">
    <property type="entry name" value="PRK00595.1"/>
    <property type="match status" value="1"/>
</dbReference>
<dbReference type="NCBIfam" id="TIGR01023">
    <property type="entry name" value="rpmG_bact"/>
    <property type="match status" value="1"/>
</dbReference>
<dbReference type="PANTHER" id="PTHR43168">
    <property type="entry name" value="50S RIBOSOMAL PROTEIN L33, CHLOROPLASTIC"/>
    <property type="match status" value="1"/>
</dbReference>
<dbReference type="PANTHER" id="PTHR43168:SF2">
    <property type="entry name" value="LARGE RIBOSOMAL SUBUNIT PROTEIN BL33C"/>
    <property type="match status" value="1"/>
</dbReference>
<dbReference type="Pfam" id="PF00471">
    <property type="entry name" value="Ribosomal_L33"/>
    <property type="match status" value="1"/>
</dbReference>
<dbReference type="SUPFAM" id="SSF57829">
    <property type="entry name" value="Zn-binding ribosomal proteins"/>
    <property type="match status" value="1"/>
</dbReference>
<dbReference type="PROSITE" id="PS00582">
    <property type="entry name" value="RIBOSOMAL_L33"/>
    <property type="match status" value="1"/>
</dbReference>
<name>RL332_LISW6</name>
<evidence type="ECO:0000255" key="1">
    <source>
        <dbReference type="HAMAP-Rule" id="MF_00294"/>
    </source>
</evidence>
<gene>
    <name evidence="1" type="primary">rpmG2</name>
    <name type="ordered locus">lwe1350</name>
</gene>
<protein>
    <recommendedName>
        <fullName evidence="1">Large ribosomal subunit protein bL33B</fullName>
    </recommendedName>
    <alternativeName>
        <fullName evidence="1">50S ribosomal protein L33 2</fullName>
    </alternativeName>
</protein>
<proteinExistence type="inferred from homology"/>
<comment type="similarity">
    <text evidence="1">Belongs to the bacterial ribosomal protein bL33 family.</text>
</comment>
<feature type="chain" id="PRO_0000356531" description="Large ribosomal subunit protein bL33B">
    <location>
        <begin position="1"/>
        <end position="49"/>
    </location>
</feature>